<name>TTC38_XENTR</name>
<sequence>MAPLCLRDCKAWQDAGLTLSTTSNEVCKLFDATLTQYATWKNDCTLGGIDGCLSRIKDTDPNFVMGHVAANGLELIGTGRSPRVDKELANAVRVMSDLSKSQALTEREMLHVAAVETFANGNLPKAADLWERILQNHPTDLLALKFAHDCYFYLGEQRQMRDSVARVLPYWKPGTPLSSYVKGMYSFGLLETNFYDQALKVAKEALAVDQTDSWSVHTVAHVHEMRADLDSGLAFMQETENNWKGSDMLACHVYWHWALYFIEKGDYEAALTLYDNHIAPQCFASGTMLDVVDNSSMLYRLQLEGVNVGDRWKNLLQITKSHTQDHMLIFNDLHFLMSSLGSKDEDMTRELVESMQELSKSPGENQQHGLINHLGTPLCRALIEYDRGHYDKAADLMYPIRYQILGIGGSDAQRDLFNQVLIRAAINSSSKYHQNLARCLLTERDMGRPNSPLTQRLIKKCSAGPGILG</sequence>
<keyword id="KW-1185">Reference proteome</keyword>
<keyword id="KW-0677">Repeat</keyword>
<keyword id="KW-0802">TPR repeat</keyword>
<reference key="1">
    <citation type="submission" date="2004-06" db="EMBL/GenBank/DDBJ databases">
        <authorList>
            <consortium name="NIH - Xenopus Gene Collection (XGC) project"/>
        </authorList>
    </citation>
    <scope>NUCLEOTIDE SEQUENCE [LARGE SCALE MRNA]</scope>
</reference>
<gene>
    <name type="primary">ttc38</name>
</gene>
<dbReference type="EMBL" id="BC075433">
    <property type="protein sequence ID" value="AAH75433.1"/>
    <property type="molecule type" value="mRNA"/>
</dbReference>
<dbReference type="RefSeq" id="NP_001004945.1">
    <property type="nucleotide sequence ID" value="NM_001004945.1"/>
</dbReference>
<dbReference type="SMR" id="Q6DIV2"/>
<dbReference type="FunCoup" id="Q6DIV2">
    <property type="interactions" value="232"/>
</dbReference>
<dbReference type="STRING" id="8364.ENSXETP00000022671"/>
<dbReference type="PaxDb" id="8364-ENSXETP00000026816"/>
<dbReference type="DNASU" id="448351"/>
<dbReference type="GeneID" id="448351"/>
<dbReference type="KEGG" id="xtr:448351"/>
<dbReference type="AGR" id="Xenbase:XB-GENE-5833263"/>
<dbReference type="CTD" id="55020"/>
<dbReference type="eggNOG" id="KOG2610">
    <property type="taxonomic scope" value="Eukaryota"/>
</dbReference>
<dbReference type="HOGENOM" id="CLU_029972_1_1_1"/>
<dbReference type="InParanoid" id="Q6DIV2"/>
<dbReference type="OMA" id="YAFNDVH"/>
<dbReference type="OrthoDB" id="1427555at2759"/>
<dbReference type="PhylomeDB" id="Q6DIV2"/>
<dbReference type="Proteomes" id="UP000008143">
    <property type="component" value="Chromosome 3"/>
</dbReference>
<dbReference type="CDD" id="cd05804">
    <property type="entry name" value="StaR_like"/>
    <property type="match status" value="1"/>
</dbReference>
<dbReference type="Gene3D" id="1.25.40.10">
    <property type="entry name" value="Tetratricopeptide repeat domain"/>
    <property type="match status" value="1"/>
</dbReference>
<dbReference type="InterPro" id="IPR011990">
    <property type="entry name" value="TPR-like_helical_dom_sf"/>
</dbReference>
<dbReference type="InterPro" id="IPR033891">
    <property type="entry name" value="TTC38"/>
</dbReference>
<dbReference type="PANTHER" id="PTHR16263">
    <property type="entry name" value="TETRATRICOPEPTIDE REPEAT PROTEIN 38"/>
    <property type="match status" value="1"/>
</dbReference>
<dbReference type="PANTHER" id="PTHR16263:SF4">
    <property type="entry name" value="TETRATRICOPEPTIDE REPEAT PROTEIN 38"/>
    <property type="match status" value="1"/>
</dbReference>
<dbReference type="SUPFAM" id="SSF48452">
    <property type="entry name" value="TPR-like"/>
    <property type="match status" value="1"/>
</dbReference>
<proteinExistence type="evidence at transcript level"/>
<accession>Q6DIV2</accession>
<comment type="similarity">
    <text evidence="1">Belongs to the TTC38 family.</text>
</comment>
<protein>
    <recommendedName>
        <fullName>Tetratricopeptide repeat protein 38</fullName>
        <shortName>TPR repeat protein 38</shortName>
    </recommendedName>
</protein>
<evidence type="ECO:0000305" key="1"/>
<feature type="chain" id="PRO_0000321535" description="Tetratricopeptide repeat protein 38">
    <location>
        <begin position="1"/>
        <end position="469"/>
    </location>
</feature>
<feature type="repeat" description="TPR 1">
    <location>
        <begin position="107"/>
        <end position="140"/>
    </location>
</feature>
<feature type="repeat" description="TPR 2">
    <location>
        <begin position="179"/>
        <end position="212"/>
    </location>
</feature>
<feature type="repeat" description="TPR 3">
    <location>
        <begin position="251"/>
        <end position="284"/>
    </location>
</feature>
<organism>
    <name type="scientific">Xenopus tropicalis</name>
    <name type="common">Western clawed frog</name>
    <name type="synonym">Silurana tropicalis</name>
    <dbReference type="NCBI Taxonomy" id="8364"/>
    <lineage>
        <taxon>Eukaryota</taxon>
        <taxon>Metazoa</taxon>
        <taxon>Chordata</taxon>
        <taxon>Craniata</taxon>
        <taxon>Vertebrata</taxon>
        <taxon>Euteleostomi</taxon>
        <taxon>Amphibia</taxon>
        <taxon>Batrachia</taxon>
        <taxon>Anura</taxon>
        <taxon>Pipoidea</taxon>
        <taxon>Pipidae</taxon>
        <taxon>Xenopodinae</taxon>
        <taxon>Xenopus</taxon>
        <taxon>Silurana</taxon>
    </lineage>
</organism>